<protein>
    <recommendedName>
        <fullName>5,10-methylenetetrahydrofolate reductase</fullName>
        <ecNumber evidence="1">1.5.1.54</ecNumber>
    </recommendedName>
</protein>
<name>METF_BUCAP</name>
<reference key="1">
    <citation type="journal article" date="2002" name="Science">
        <title>50 million years of genomic stasis in endosymbiotic bacteria.</title>
        <authorList>
            <person name="Tamas I."/>
            <person name="Klasson L."/>
            <person name="Canbaeck B."/>
            <person name="Naeslund A.K."/>
            <person name="Eriksson A.-S."/>
            <person name="Wernegreen J.J."/>
            <person name="Sandstroem J.P."/>
            <person name="Moran N.A."/>
            <person name="Andersson S.G.E."/>
        </authorList>
    </citation>
    <scope>NUCLEOTIDE SEQUENCE [LARGE SCALE GENOMIC DNA]</scope>
    <source>
        <strain>Sg</strain>
    </source>
</reference>
<organism>
    <name type="scientific">Buchnera aphidicola subsp. Schizaphis graminum (strain Sg)</name>
    <dbReference type="NCBI Taxonomy" id="198804"/>
    <lineage>
        <taxon>Bacteria</taxon>
        <taxon>Pseudomonadati</taxon>
        <taxon>Pseudomonadota</taxon>
        <taxon>Gammaproteobacteria</taxon>
        <taxon>Enterobacterales</taxon>
        <taxon>Erwiniaceae</taxon>
        <taxon>Buchnera</taxon>
    </lineage>
</organism>
<comment type="function">
    <text evidence="1">Catalyzes the NADH-dependent reduction of 5,10-methylenetetrahydrofolate to 5-methyltetrahydrofolate. Is required to provide the methyl group necessary for methionine synthetase to convert homocysteine to methionine; the methyl group is given by 5-methyltetrahydrofolate.</text>
</comment>
<comment type="catalytic activity">
    <reaction evidence="1">
        <text>(6S)-5-methyl-5,6,7,8-tetrahydrofolate + NAD(+) = (6R)-5,10-methylene-5,6,7,8-tetrahydrofolate + NADH + H(+)</text>
        <dbReference type="Rhea" id="RHEA:19821"/>
        <dbReference type="ChEBI" id="CHEBI:15378"/>
        <dbReference type="ChEBI" id="CHEBI:15636"/>
        <dbReference type="ChEBI" id="CHEBI:18608"/>
        <dbReference type="ChEBI" id="CHEBI:57540"/>
        <dbReference type="ChEBI" id="CHEBI:57945"/>
        <dbReference type="EC" id="1.5.1.54"/>
    </reaction>
    <physiologicalReaction direction="right-to-left" evidence="1">
        <dbReference type="Rhea" id="RHEA:19823"/>
    </physiologicalReaction>
</comment>
<comment type="cofactor">
    <cofactor evidence="1">
        <name>FAD</name>
        <dbReference type="ChEBI" id="CHEBI:57692"/>
    </cofactor>
</comment>
<comment type="pathway">
    <text>One-carbon metabolism; tetrahydrofolate interconversion.</text>
</comment>
<comment type="pathway">
    <text evidence="1">Amino-acid biosynthesis; L-methionine biosynthesis via de novo pathway.</text>
</comment>
<comment type="similarity">
    <text evidence="2">Belongs to the methylenetetrahydrofolate reductase family.</text>
</comment>
<gene>
    <name type="primary">metF</name>
    <name type="ordered locus">BUsg_043</name>
</gene>
<keyword id="KW-0028">Amino-acid biosynthesis</keyword>
<keyword id="KW-0274">FAD</keyword>
<keyword id="KW-0285">Flavoprotein</keyword>
<keyword id="KW-0486">Methionine biosynthesis</keyword>
<keyword id="KW-0520">NAD</keyword>
<keyword id="KW-0560">Oxidoreductase</keyword>
<dbReference type="EC" id="1.5.1.54" evidence="1"/>
<dbReference type="EMBL" id="AE013218">
    <property type="protein sequence ID" value="AAM67614.1"/>
    <property type="molecule type" value="Genomic_DNA"/>
</dbReference>
<dbReference type="RefSeq" id="WP_011053580.1">
    <property type="nucleotide sequence ID" value="NC_004061.1"/>
</dbReference>
<dbReference type="SMR" id="Q8KA62"/>
<dbReference type="STRING" id="198804.BUsg_043"/>
<dbReference type="GeneID" id="93003510"/>
<dbReference type="KEGG" id="bas:BUsg_043"/>
<dbReference type="eggNOG" id="COG0685">
    <property type="taxonomic scope" value="Bacteria"/>
</dbReference>
<dbReference type="HOGENOM" id="CLU_025841_0_0_6"/>
<dbReference type="UniPathway" id="UPA00051"/>
<dbReference type="UniPathway" id="UPA00193"/>
<dbReference type="Proteomes" id="UP000000416">
    <property type="component" value="Chromosome"/>
</dbReference>
<dbReference type="GO" id="GO:0005829">
    <property type="term" value="C:cytosol"/>
    <property type="evidence" value="ECO:0007669"/>
    <property type="project" value="InterPro"/>
</dbReference>
<dbReference type="GO" id="GO:0071949">
    <property type="term" value="F:FAD binding"/>
    <property type="evidence" value="ECO:0007669"/>
    <property type="project" value="TreeGrafter"/>
</dbReference>
<dbReference type="GO" id="GO:0106312">
    <property type="term" value="F:methylenetetrahydrofolate reductase (NADH) activity"/>
    <property type="evidence" value="ECO:0007669"/>
    <property type="project" value="RHEA"/>
</dbReference>
<dbReference type="GO" id="GO:0009086">
    <property type="term" value="P:methionine biosynthetic process"/>
    <property type="evidence" value="ECO:0007669"/>
    <property type="project" value="UniProtKB-KW"/>
</dbReference>
<dbReference type="GO" id="GO:0035999">
    <property type="term" value="P:tetrahydrofolate interconversion"/>
    <property type="evidence" value="ECO:0007669"/>
    <property type="project" value="UniProtKB-UniPathway"/>
</dbReference>
<dbReference type="CDD" id="cd00537">
    <property type="entry name" value="MTHFR"/>
    <property type="match status" value="1"/>
</dbReference>
<dbReference type="Gene3D" id="3.20.20.220">
    <property type="match status" value="1"/>
</dbReference>
<dbReference type="InterPro" id="IPR029041">
    <property type="entry name" value="FAD-linked_oxidoreductase-like"/>
</dbReference>
<dbReference type="InterPro" id="IPR003171">
    <property type="entry name" value="Mehydrof_redctse-like"/>
</dbReference>
<dbReference type="InterPro" id="IPR004620">
    <property type="entry name" value="MTHF_reductase_bac"/>
</dbReference>
<dbReference type="NCBIfam" id="TIGR00676">
    <property type="entry name" value="fadh2"/>
    <property type="match status" value="1"/>
</dbReference>
<dbReference type="NCBIfam" id="NF006950">
    <property type="entry name" value="PRK09432.1"/>
    <property type="match status" value="1"/>
</dbReference>
<dbReference type="PANTHER" id="PTHR45754">
    <property type="entry name" value="METHYLENETETRAHYDROFOLATE REDUCTASE"/>
    <property type="match status" value="1"/>
</dbReference>
<dbReference type="PANTHER" id="PTHR45754:SF3">
    <property type="entry name" value="METHYLENETETRAHYDROFOLATE REDUCTASE (NADPH)"/>
    <property type="match status" value="1"/>
</dbReference>
<dbReference type="Pfam" id="PF02219">
    <property type="entry name" value="MTHFR"/>
    <property type="match status" value="1"/>
</dbReference>
<dbReference type="SUPFAM" id="SSF51730">
    <property type="entry name" value="FAD-linked oxidoreductase"/>
    <property type="match status" value="1"/>
</dbReference>
<accession>Q8KA62</accession>
<evidence type="ECO:0000250" key="1">
    <source>
        <dbReference type="UniProtKB" id="P0AEZ1"/>
    </source>
</evidence>
<evidence type="ECO:0000305" key="2"/>
<feature type="chain" id="PRO_0000190259" description="5,10-methylenetetrahydrofolate reductase">
    <location>
        <begin position="1"/>
        <end position="292"/>
    </location>
</feature>
<feature type="active site" description="Proton donor/acceptor" evidence="1">
    <location>
        <position position="28"/>
    </location>
</feature>
<feature type="binding site" evidence="1">
    <location>
        <position position="59"/>
    </location>
    <ligand>
        <name>NADH</name>
        <dbReference type="ChEBI" id="CHEBI:57945"/>
    </ligand>
</feature>
<feature type="binding site" evidence="1">
    <location>
        <position position="60"/>
    </location>
    <ligand>
        <name>FAD</name>
        <dbReference type="ChEBI" id="CHEBI:57692"/>
    </ligand>
</feature>
<feature type="binding site" evidence="1">
    <location>
        <position position="62"/>
    </location>
    <ligand>
        <name>FAD</name>
        <dbReference type="ChEBI" id="CHEBI:57692"/>
    </ligand>
</feature>
<feature type="binding site" evidence="1">
    <location>
        <position position="88"/>
    </location>
    <ligand>
        <name>FAD</name>
        <dbReference type="ChEBI" id="CHEBI:57692"/>
    </ligand>
</feature>
<feature type="binding site" evidence="1">
    <location>
        <position position="118"/>
    </location>
    <ligand>
        <name>FAD</name>
        <dbReference type="ChEBI" id="CHEBI:57692"/>
    </ligand>
</feature>
<feature type="binding site" evidence="1">
    <location>
        <position position="119"/>
    </location>
    <ligand>
        <name>FAD</name>
        <dbReference type="ChEBI" id="CHEBI:57692"/>
    </ligand>
</feature>
<feature type="binding site" evidence="1">
    <location>
        <position position="120"/>
    </location>
    <ligand>
        <name>(6S)-5-methyl-5,6,7,8-tetrahydrofolate</name>
        <dbReference type="ChEBI" id="CHEBI:18608"/>
    </ligand>
</feature>
<feature type="binding site" evidence="1">
    <location>
        <position position="120"/>
    </location>
    <ligand>
        <name>FAD</name>
        <dbReference type="ChEBI" id="CHEBI:57692"/>
    </ligand>
</feature>
<feature type="binding site" evidence="1">
    <location>
        <position position="132"/>
    </location>
    <ligand>
        <name>FAD</name>
        <dbReference type="ChEBI" id="CHEBI:57692"/>
    </ligand>
</feature>
<feature type="binding site" evidence="1">
    <location>
        <position position="152"/>
    </location>
    <ligand>
        <name>FAD</name>
        <dbReference type="ChEBI" id="CHEBI:57692"/>
    </ligand>
</feature>
<feature type="binding site" evidence="1">
    <location>
        <position position="156"/>
    </location>
    <ligand>
        <name>FAD</name>
        <dbReference type="ChEBI" id="CHEBI:57692"/>
    </ligand>
</feature>
<feature type="binding site" evidence="1">
    <location>
        <position position="165"/>
    </location>
    <ligand>
        <name>FAD</name>
        <dbReference type="ChEBI" id="CHEBI:57692"/>
    </ligand>
</feature>
<feature type="binding site" evidence="1">
    <location>
        <position position="168"/>
    </location>
    <ligand>
        <name>FAD</name>
        <dbReference type="ChEBI" id="CHEBI:57692"/>
    </ligand>
</feature>
<feature type="binding site" evidence="1">
    <location>
        <position position="171"/>
    </location>
    <ligand>
        <name>FAD</name>
        <dbReference type="ChEBI" id="CHEBI:57692"/>
    </ligand>
</feature>
<feature type="binding site" evidence="1">
    <location>
        <position position="172"/>
    </location>
    <ligand>
        <name>FAD</name>
        <dbReference type="ChEBI" id="CHEBI:57692"/>
    </ligand>
</feature>
<feature type="binding site" evidence="1">
    <location>
        <position position="183"/>
    </location>
    <ligand>
        <name>(6S)-5-methyl-5,6,7,8-tetrahydrofolate</name>
        <dbReference type="ChEBI" id="CHEBI:18608"/>
    </ligand>
</feature>
<feature type="binding site" evidence="1">
    <location>
        <position position="183"/>
    </location>
    <ligand>
        <name>NADH</name>
        <dbReference type="ChEBI" id="CHEBI:57945"/>
    </ligand>
</feature>
<feature type="binding site" evidence="1">
    <location>
        <position position="219"/>
    </location>
    <ligand>
        <name>(6S)-5-methyl-5,6,7,8-tetrahydrofolate</name>
        <dbReference type="ChEBI" id="CHEBI:18608"/>
    </ligand>
</feature>
<feature type="binding site" evidence="1">
    <location>
        <position position="279"/>
    </location>
    <ligand>
        <name>(6S)-5-methyl-5,6,7,8-tetrahydrofolate</name>
        <dbReference type="ChEBI" id="CHEBI:18608"/>
    </ligand>
</feature>
<proteinExistence type="inferred from homology"/>
<sequence length="292" mass="33676">MNFLHQYYQDIIKKKLENLNDKIQCSFEFFPPKNLDTEKKLFSSVVKLSLLKPFLFSVTYGANSGERKKTYSIVQRIHKKTGITTAPHLTCVDASLSELKEIAKFYWENGIRSIVALRGDVPNKSYQHKIYALDLVVLLKKIADFDISVAAYPEIHPESKNAQSDILNLKKKADAGANRAITQFFFNVESYLRFRDNCIKNNINIEIIPGILPIYNFEQLKKFSSMTNVSIPKWMFEMFNGLDEDLETQKIIGSNIVINIVKTLLYEGVKNFHFYTLNKSDVIYSICHMFGL</sequence>